<name>YZ10_AQUAE</name>
<accession>O66404</accession>
<keyword id="KW-0614">Plasmid</keyword>
<keyword id="KW-1185">Reference proteome</keyword>
<geneLocation type="plasmid">
    <name>ece1</name>
</geneLocation>
<comment type="similarity">
    <text evidence="1">To A.aeolicus AQ_423.</text>
</comment>
<dbReference type="EMBL" id="AE000667">
    <property type="protein sequence ID" value="AAC07956.1"/>
    <property type="molecule type" value="Genomic_DNA"/>
</dbReference>
<dbReference type="RefSeq" id="NP_046404.1">
    <property type="nucleotide sequence ID" value="NC_001880.1"/>
</dbReference>
<dbReference type="RefSeq" id="WP_010890550.1">
    <property type="nucleotide sequence ID" value="NC_001880.1"/>
</dbReference>
<dbReference type="SMR" id="O66404"/>
<dbReference type="EnsemblBacteria" id="AAC07956">
    <property type="protein sequence ID" value="AAC07956"/>
    <property type="gene ID" value="aq_aa10"/>
</dbReference>
<dbReference type="KEGG" id="aae:aq_aa10"/>
<dbReference type="eggNOG" id="ENOG502ZKMV">
    <property type="taxonomic scope" value="Bacteria"/>
</dbReference>
<dbReference type="HOGENOM" id="CLU_1399959_0_0_0"/>
<dbReference type="InParanoid" id="O66404"/>
<dbReference type="OrthoDB" id="14630at2"/>
<dbReference type="Proteomes" id="UP000000798">
    <property type="component" value="Plasmid ece1"/>
</dbReference>
<organism>
    <name type="scientific">Aquifex aeolicus (strain VF5)</name>
    <dbReference type="NCBI Taxonomy" id="224324"/>
    <lineage>
        <taxon>Bacteria</taxon>
        <taxon>Pseudomonadati</taxon>
        <taxon>Aquificota</taxon>
        <taxon>Aquificia</taxon>
        <taxon>Aquificales</taxon>
        <taxon>Aquificaceae</taxon>
        <taxon>Aquifex</taxon>
    </lineage>
</organism>
<gene>
    <name type="ordered locus">aq_aa10</name>
</gene>
<proteinExistence type="predicted"/>
<sequence length="194" mass="23393">MNKLLESPYDIVLEEVREGKVNPFDVDLDHLIALFRKKAKELKGSEYMLEAGKFLEASSKLLLLKLEYFFPKSQKERKKVSLKEVQEVLIEEGEEDLSRFDTSFLWEYSPEVGRPKSSKGEKPKILEWREFWKLSKERVPLHREPNWQEEAKRVYEEIKRGVFRIRNLRDFIAFLFAYMEYEEVQKEELLRRLL</sequence>
<feature type="chain" id="PRO_0000186984" description="Uncharacterized protein aq_aa10">
    <location>
        <begin position="1"/>
        <end position="194"/>
    </location>
</feature>
<protein>
    <recommendedName>
        <fullName>Uncharacterized protein aq_aa10</fullName>
    </recommendedName>
</protein>
<reference key="1">
    <citation type="journal article" date="1998" name="Nature">
        <title>The complete genome of the hyperthermophilic bacterium Aquifex aeolicus.</title>
        <authorList>
            <person name="Deckert G."/>
            <person name="Warren P.V."/>
            <person name="Gaasterland T."/>
            <person name="Young W.G."/>
            <person name="Lenox A.L."/>
            <person name="Graham D.E."/>
            <person name="Overbeek R."/>
            <person name="Snead M.A."/>
            <person name="Keller M."/>
            <person name="Aujay M."/>
            <person name="Huber R."/>
            <person name="Feldman R.A."/>
            <person name="Short J.M."/>
            <person name="Olsen G.J."/>
            <person name="Swanson R.V."/>
        </authorList>
    </citation>
    <scope>NUCLEOTIDE SEQUENCE [LARGE SCALE GENOMIC DNA]</scope>
    <source>
        <strain>VF5</strain>
    </source>
</reference>
<evidence type="ECO:0000305" key="1"/>